<name>RPOA_VIBVY</name>
<comment type="function">
    <text evidence="1">DNA-dependent RNA polymerase catalyzes the transcription of DNA into RNA using the four ribonucleoside triphosphates as substrates.</text>
</comment>
<comment type="catalytic activity">
    <reaction evidence="1">
        <text>RNA(n) + a ribonucleoside 5'-triphosphate = RNA(n+1) + diphosphate</text>
        <dbReference type="Rhea" id="RHEA:21248"/>
        <dbReference type="Rhea" id="RHEA-COMP:14527"/>
        <dbReference type="Rhea" id="RHEA-COMP:17342"/>
        <dbReference type="ChEBI" id="CHEBI:33019"/>
        <dbReference type="ChEBI" id="CHEBI:61557"/>
        <dbReference type="ChEBI" id="CHEBI:140395"/>
        <dbReference type="EC" id="2.7.7.6"/>
    </reaction>
</comment>
<comment type="subunit">
    <text evidence="1">Homodimer. The RNAP catalytic core consists of 2 alpha, 1 beta, 1 beta' and 1 omega subunit. When a sigma factor is associated with the core the holoenzyme is formed, which can initiate transcription.</text>
</comment>
<comment type="domain">
    <text evidence="1">The N-terminal domain is essential for RNAP assembly and basal transcription, whereas the C-terminal domain is involved in interaction with transcriptional regulators and with upstream promoter elements.</text>
</comment>
<comment type="similarity">
    <text evidence="1">Belongs to the RNA polymerase alpha chain family.</text>
</comment>
<organism>
    <name type="scientific">Vibrio vulnificus (strain YJ016)</name>
    <dbReference type="NCBI Taxonomy" id="196600"/>
    <lineage>
        <taxon>Bacteria</taxon>
        <taxon>Pseudomonadati</taxon>
        <taxon>Pseudomonadota</taxon>
        <taxon>Gammaproteobacteria</taxon>
        <taxon>Vibrionales</taxon>
        <taxon>Vibrionaceae</taxon>
        <taxon>Vibrio</taxon>
    </lineage>
</organism>
<reference key="1">
    <citation type="journal article" date="2003" name="Genome Res.">
        <title>Comparative genome analysis of Vibrio vulnificus, a marine pathogen.</title>
        <authorList>
            <person name="Chen C.-Y."/>
            <person name="Wu K.-M."/>
            <person name="Chang Y.-C."/>
            <person name="Chang C.-H."/>
            <person name="Tsai H.-C."/>
            <person name="Liao T.-L."/>
            <person name="Liu Y.-M."/>
            <person name="Chen H.-J."/>
            <person name="Shen A.B.-T."/>
            <person name="Li J.-C."/>
            <person name="Su T.-L."/>
            <person name="Shao C.-P."/>
            <person name="Lee C.-T."/>
            <person name="Hor L.-I."/>
            <person name="Tsai S.-F."/>
        </authorList>
    </citation>
    <scope>NUCLEOTIDE SEQUENCE [LARGE SCALE GENOMIC DNA]</scope>
    <source>
        <strain>YJ016</strain>
    </source>
</reference>
<sequence length="330" mass="36459">MQGSVTEFLKPRLVDIEQISSTHAKVTLEPLERGFGHTLGNALRRILLSSMPGCAVTEVEIEGVLHEYSTKEGVQEDILEILLNLKGLAVRVAEGKDEVFITLNKSGSGPVVAGDITHDGDVEIANPEHVICHLTDDNAEIAMRIKVERGRGYVPASARIHTEEDERPIGRLLVDATYSPVDKIAYAVEAARVEQRTDLDKLVIDMETNGTLEPEEAIRRAATILAEQLDAFVDLRDVRVPEEKEEKPEFDPILLRPVDDLELTVRSANCLKAEAIHYIGDLVQRTEVELLKTPNLGKKSLTEIKDVLASRGLSLGMRLENWPPASIAED</sequence>
<evidence type="ECO:0000255" key="1">
    <source>
        <dbReference type="HAMAP-Rule" id="MF_00059"/>
    </source>
</evidence>
<feature type="chain" id="PRO_0000175419" description="DNA-directed RNA polymerase subunit alpha">
    <location>
        <begin position="1"/>
        <end position="330"/>
    </location>
</feature>
<feature type="region of interest" description="Alpha N-terminal domain (alpha-NTD)" evidence="1">
    <location>
        <begin position="1"/>
        <end position="236"/>
    </location>
</feature>
<feature type="region of interest" description="Alpha C-terminal domain (alpha-CTD)" evidence="1">
    <location>
        <begin position="250"/>
        <end position="330"/>
    </location>
</feature>
<accession>Q7MPG4</accession>
<protein>
    <recommendedName>
        <fullName evidence="1">DNA-directed RNA polymerase subunit alpha</fullName>
        <shortName evidence="1">RNAP subunit alpha</shortName>
        <ecNumber evidence="1">2.7.7.6</ecNumber>
    </recommendedName>
    <alternativeName>
        <fullName evidence="1">RNA polymerase subunit alpha</fullName>
    </alternativeName>
    <alternativeName>
        <fullName evidence="1">Transcriptase subunit alpha</fullName>
    </alternativeName>
</protein>
<gene>
    <name evidence="1" type="primary">rpoA</name>
    <name type="ordered locus">VV0399</name>
</gene>
<keyword id="KW-0240">DNA-directed RNA polymerase</keyword>
<keyword id="KW-0548">Nucleotidyltransferase</keyword>
<keyword id="KW-0804">Transcription</keyword>
<keyword id="KW-0808">Transferase</keyword>
<proteinExistence type="inferred from homology"/>
<dbReference type="EC" id="2.7.7.6" evidence="1"/>
<dbReference type="EMBL" id="BA000037">
    <property type="protein sequence ID" value="BAC93163.1"/>
    <property type="molecule type" value="Genomic_DNA"/>
</dbReference>
<dbReference type="RefSeq" id="WP_010445384.1">
    <property type="nucleotide sequence ID" value="NC_005139.1"/>
</dbReference>
<dbReference type="SMR" id="Q7MPG4"/>
<dbReference type="STRING" id="672.VV93_v1c03710"/>
<dbReference type="KEGG" id="vvy:VV0399"/>
<dbReference type="eggNOG" id="COG0202">
    <property type="taxonomic scope" value="Bacteria"/>
</dbReference>
<dbReference type="HOGENOM" id="CLU_053084_0_0_6"/>
<dbReference type="Proteomes" id="UP000002675">
    <property type="component" value="Chromosome I"/>
</dbReference>
<dbReference type="GO" id="GO:0005737">
    <property type="term" value="C:cytoplasm"/>
    <property type="evidence" value="ECO:0007669"/>
    <property type="project" value="UniProtKB-ARBA"/>
</dbReference>
<dbReference type="GO" id="GO:0000428">
    <property type="term" value="C:DNA-directed RNA polymerase complex"/>
    <property type="evidence" value="ECO:0007669"/>
    <property type="project" value="UniProtKB-KW"/>
</dbReference>
<dbReference type="GO" id="GO:0003677">
    <property type="term" value="F:DNA binding"/>
    <property type="evidence" value="ECO:0007669"/>
    <property type="project" value="UniProtKB-UniRule"/>
</dbReference>
<dbReference type="GO" id="GO:0003899">
    <property type="term" value="F:DNA-directed RNA polymerase activity"/>
    <property type="evidence" value="ECO:0007669"/>
    <property type="project" value="UniProtKB-UniRule"/>
</dbReference>
<dbReference type="GO" id="GO:0046983">
    <property type="term" value="F:protein dimerization activity"/>
    <property type="evidence" value="ECO:0007669"/>
    <property type="project" value="InterPro"/>
</dbReference>
<dbReference type="GO" id="GO:0006351">
    <property type="term" value="P:DNA-templated transcription"/>
    <property type="evidence" value="ECO:0007669"/>
    <property type="project" value="UniProtKB-UniRule"/>
</dbReference>
<dbReference type="CDD" id="cd06928">
    <property type="entry name" value="RNAP_alpha_NTD"/>
    <property type="match status" value="1"/>
</dbReference>
<dbReference type="FunFam" id="1.10.150.20:FF:000001">
    <property type="entry name" value="DNA-directed RNA polymerase subunit alpha"/>
    <property type="match status" value="1"/>
</dbReference>
<dbReference type="FunFam" id="2.170.120.12:FF:000001">
    <property type="entry name" value="DNA-directed RNA polymerase subunit alpha"/>
    <property type="match status" value="1"/>
</dbReference>
<dbReference type="Gene3D" id="1.10.150.20">
    <property type="entry name" value="5' to 3' exonuclease, C-terminal subdomain"/>
    <property type="match status" value="1"/>
</dbReference>
<dbReference type="Gene3D" id="2.170.120.12">
    <property type="entry name" value="DNA-directed RNA polymerase, insert domain"/>
    <property type="match status" value="1"/>
</dbReference>
<dbReference type="Gene3D" id="3.30.1360.10">
    <property type="entry name" value="RNA polymerase, RBP11-like subunit"/>
    <property type="match status" value="1"/>
</dbReference>
<dbReference type="HAMAP" id="MF_00059">
    <property type="entry name" value="RNApol_bact_RpoA"/>
    <property type="match status" value="1"/>
</dbReference>
<dbReference type="InterPro" id="IPR011262">
    <property type="entry name" value="DNA-dir_RNA_pol_insert"/>
</dbReference>
<dbReference type="InterPro" id="IPR011263">
    <property type="entry name" value="DNA-dir_RNA_pol_RpoA/D/Rpb3"/>
</dbReference>
<dbReference type="InterPro" id="IPR011773">
    <property type="entry name" value="DNA-dir_RpoA"/>
</dbReference>
<dbReference type="InterPro" id="IPR036603">
    <property type="entry name" value="RBP11-like"/>
</dbReference>
<dbReference type="InterPro" id="IPR011260">
    <property type="entry name" value="RNAP_asu_C"/>
</dbReference>
<dbReference type="InterPro" id="IPR036643">
    <property type="entry name" value="RNApol_insert_sf"/>
</dbReference>
<dbReference type="NCBIfam" id="NF003513">
    <property type="entry name" value="PRK05182.1-2"/>
    <property type="match status" value="1"/>
</dbReference>
<dbReference type="NCBIfam" id="NF003519">
    <property type="entry name" value="PRK05182.2-5"/>
    <property type="match status" value="1"/>
</dbReference>
<dbReference type="NCBIfam" id="TIGR02027">
    <property type="entry name" value="rpoA"/>
    <property type="match status" value="1"/>
</dbReference>
<dbReference type="Pfam" id="PF01000">
    <property type="entry name" value="RNA_pol_A_bac"/>
    <property type="match status" value="1"/>
</dbReference>
<dbReference type="Pfam" id="PF03118">
    <property type="entry name" value="RNA_pol_A_CTD"/>
    <property type="match status" value="1"/>
</dbReference>
<dbReference type="Pfam" id="PF01193">
    <property type="entry name" value="RNA_pol_L"/>
    <property type="match status" value="1"/>
</dbReference>
<dbReference type="SMART" id="SM00662">
    <property type="entry name" value="RPOLD"/>
    <property type="match status" value="1"/>
</dbReference>
<dbReference type="SUPFAM" id="SSF47789">
    <property type="entry name" value="C-terminal domain of RNA polymerase alpha subunit"/>
    <property type="match status" value="1"/>
</dbReference>
<dbReference type="SUPFAM" id="SSF56553">
    <property type="entry name" value="Insert subdomain of RNA polymerase alpha subunit"/>
    <property type="match status" value="1"/>
</dbReference>
<dbReference type="SUPFAM" id="SSF55257">
    <property type="entry name" value="RBP11-like subunits of RNA polymerase"/>
    <property type="match status" value="1"/>
</dbReference>